<dbReference type="EMBL" id="AK143073">
    <property type="protein sequence ID" value="BAE25262.1"/>
    <property type="molecule type" value="mRNA"/>
</dbReference>
<dbReference type="EMBL" id="AL731709">
    <property type="status" value="NOT_ANNOTATED_CDS"/>
    <property type="molecule type" value="Genomic_DNA"/>
</dbReference>
<dbReference type="EMBL" id="CH466519">
    <property type="protein sequence ID" value="EDL27597.1"/>
    <property type="molecule type" value="Genomic_DNA"/>
</dbReference>
<dbReference type="EMBL" id="BC010822">
    <property type="protein sequence ID" value="AAH10822.1"/>
    <property type="molecule type" value="mRNA"/>
</dbReference>
<dbReference type="CCDS" id="CCDS16444.1"/>
<dbReference type="RefSeq" id="NP_660104.2">
    <property type="nucleotide sequence ID" value="NM_145122.3"/>
</dbReference>
<dbReference type="BioGRID" id="202117">
    <property type="interactions" value="2"/>
</dbReference>
<dbReference type="FunCoup" id="Q91XC9">
    <property type="interactions" value="2690"/>
</dbReference>
<dbReference type="STRING" id="10090.ENSMUSP00000028650"/>
<dbReference type="iPTMnet" id="Q91XC9"/>
<dbReference type="PhosphoSitePlus" id="Q91XC9"/>
<dbReference type="SwissPalm" id="Q91XC9"/>
<dbReference type="jPOST" id="Q91XC9"/>
<dbReference type="PaxDb" id="10090-ENSMUSP00000028650"/>
<dbReference type="PeptideAtlas" id="Q91XC9"/>
<dbReference type="ProteomicsDB" id="287917"/>
<dbReference type="Pumba" id="Q91XC9"/>
<dbReference type="Antibodypedia" id="26211">
    <property type="antibodies" value="125 antibodies from 26 providers"/>
</dbReference>
<dbReference type="DNASU" id="18633"/>
<dbReference type="Ensembl" id="ENSMUST00000028650.9">
    <property type="protein sequence ID" value="ENSMUSP00000028650.9"/>
    <property type="gene ID" value="ENSMUSG00000027222.15"/>
</dbReference>
<dbReference type="GeneID" id="18633"/>
<dbReference type="KEGG" id="mmu:18633"/>
<dbReference type="UCSC" id="uc008kxs.2">
    <property type="organism name" value="mouse"/>
</dbReference>
<dbReference type="AGR" id="MGI:1338829"/>
<dbReference type="CTD" id="9409"/>
<dbReference type="MGI" id="MGI:1338829">
    <property type="gene designation" value="Pex16"/>
</dbReference>
<dbReference type="VEuPathDB" id="HostDB:ENSMUSG00000027222"/>
<dbReference type="eggNOG" id="KOG4546">
    <property type="taxonomic scope" value="Eukaryota"/>
</dbReference>
<dbReference type="GeneTree" id="ENSGT00390000017790"/>
<dbReference type="HOGENOM" id="CLU_070601_0_0_1"/>
<dbReference type="InParanoid" id="Q91XC9"/>
<dbReference type="OMA" id="PTWQSTY"/>
<dbReference type="OrthoDB" id="2021143at2759"/>
<dbReference type="PhylomeDB" id="Q91XC9"/>
<dbReference type="TreeFam" id="TF324139"/>
<dbReference type="Reactome" id="R-MMU-9603798">
    <property type="pathway name" value="Class I peroxisomal membrane protein import"/>
</dbReference>
<dbReference type="BioGRID-ORCS" id="18633">
    <property type="hits" value="12 hits in 79 CRISPR screens"/>
</dbReference>
<dbReference type="PRO" id="PR:Q91XC9"/>
<dbReference type="Proteomes" id="UP000000589">
    <property type="component" value="Chromosome 2"/>
</dbReference>
<dbReference type="RNAct" id="Q91XC9">
    <property type="molecule type" value="protein"/>
</dbReference>
<dbReference type="Bgee" id="ENSMUSG00000027222">
    <property type="expression patterns" value="Expressed in left lobe of liver and 242 other cell types or tissues"/>
</dbReference>
<dbReference type="GO" id="GO:0005789">
    <property type="term" value="C:endoplasmic reticulum membrane"/>
    <property type="evidence" value="ECO:0007669"/>
    <property type="project" value="Ensembl"/>
</dbReference>
<dbReference type="GO" id="GO:0005778">
    <property type="term" value="C:peroxisomal membrane"/>
    <property type="evidence" value="ECO:0000314"/>
    <property type="project" value="HGNC-UCL"/>
</dbReference>
<dbReference type="GO" id="GO:0106101">
    <property type="term" value="P:ER-dependent peroxisome localization"/>
    <property type="evidence" value="ECO:0007669"/>
    <property type="project" value="Ensembl"/>
</dbReference>
<dbReference type="GO" id="GO:0032581">
    <property type="term" value="P:ER-dependent peroxisome organization"/>
    <property type="evidence" value="ECO:0007669"/>
    <property type="project" value="Ensembl"/>
</dbReference>
<dbReference type="GO" id="GO:0016557">
    <property type="term" value="P:peroxisome membrane biogenesis"/>
    <property type="evidence" value="ECO:0007669"/>
    <property type="project" value="Ensembl"/>
</dbReference>
<dbReference type="GO" id="GO:0016558">
    <property type="term" value="P:protein import into peroxisome matrix"/>
    <property type="evidence" value="ECO:0000266"/>
    <property type="project" value="MGI"/>
</dbReference>
<dbReference type="GO" id="GO:0045046">
    <property type="term" value="P:protein import into peroxisome membrane"/>
    <property type="evidence" value="ECO:0007669"/>
    <property type="project" value="Ensembl"/>
</dbReference>
<dbReference type="GO" id="GO:0006625">
    <property type="term" value="P:protein targeting to peroxisome"/>
    <property type="evidence" value="ECO:0007669"/>
    <property type="project" value="Ensembl"/>
</dbReference>
<dbReference type="GO" id="GO:0022615">
    <property type="term" value="P:protein to membrane docking"/>
    <property type="evidence" value="ECO:0007669"/>
    <property type="project" value="Ensembl"/>
</dbReference>
<dbReference type="InterPro" id="IPR013919">
    <property type="entry name" value="Pex16"/>
</dbReference>
<dbReference type="PANTHER" id="PTHR13299">
    <property type="entry name" value="PEROXISOMAL MEMBRANE PROTEIN PEX16"/>
    <property type="match status" value="1"/>
</dbReference>
<dbReference type="PANTHER" id="PTHR13299:SF0">
    <property type="entry name" value="PEROXISOMAL MEMBRANE PROTEIN PEX16"/>
    <property type="match status" value="1"/>
</dbReference>
<dbReference type="Pfam" id="PF08610">
    <property type="entry name" value="Pex16"/>
    <property type="match status" value="1"/>
</dbReference>
<feature type="chain" id="PRO_0000366961" description="Peroxisomal membrane protein PEX16">
    <location>
        <begin position="1"/>
        <end position="336"/>
    </location>
</feature>
<feature type="topological domain" description="Cytoplasmic" evidence="2">
    <location>
        <begin position="1"/>
        <end position="84"/>
    </location>
</feature>
<feature type="transmembrane region" description="Helical" evidence="2">
    <location>
        <begin position="85"/>
        <end position="105"/>
    </location>
</feature>
<feature type="topological domain" description="Peroxisomal" evidence="2">
    <location>
        <begin position="106"/>
        <end position="110"/>
    </location>
</feature>
<feature type="transmembrane region" description="Helical" evidence="2">
    <location>
        <begin position="111"/>
        <end position="131"/>
    </location>
</feature>
<feature type="topological domain" description="Cytoplasmic" evidence="2">
    <location>
        <begin position="132"/>
        <end position="336"/>
    </location>
</feature>
<feature type="region of interest" description="Required for peroxisomal location" evidence="1">
    <location>
        <begin position="66"/>
        <end position="81"/>
    </location>
</feature>
<feature type="region of interest" description="Interaction with PEX19" evidence="1">
    <location>
        <begin position="221"/>
        <end position="336"/>
    </location>
</feature>
<feature type="sequence conflict" description="In Ref. 4; AAH10822." evidence="3" ref="4">
    <original>R</original>
    <variation>Q</variation>
    <location>
        <position position="268"/>
    </location>
</feature>
<reference key="1">
    <citation type="journal article" date="2005" name="Science">
        <title>The transcriptional landscape of the mammalian genome.</title>
        <authorList>
            <person name="Carninci P."/>
            <person name="Kasukawa T."/>
            <person name="Katayama S."/>
            <person name="Gough J."/>
            <person name="Frith M.C."/>
            <person name="Maeda N."/>
            <person name="Oyama R."/>
            <person name="Ravasi T."/>
            <person name="Lenhard B."/>
            <person name="Wells C."/>
            <person name="Kodzius R."/>
            <person name="Shimokawa K."/>
            <person name="Bajic V.B."/>
            <person name="Brenner S.E."/>
            <person name="Batalov S."/>
            <person name="Forrest A.R."/>
            <person name="Zavolan M."/>
            <person name="Davis M.J."/>
            <person name="Wilming L.G."/>
            <person name="Aidinis V."/>
            <person name="Allen J.E."/>
            <person name="Ambesi-Impiombato A."/>
            <person name="Apweiler R."/>
            <person name="Aturaliya R.N."/>
            <person name="Bailey T.L."/>
            <person name="Bansal M."/>
            <person name="Baxter L."/>
            <person name="Beisel K.W."/>
            <person name="Bersano T."/>
            <person name="Bono H."/>
            <person name="Chalk A.M."/>
            <person name="Chiu K.P."/>
            <person name="Choudhary V."/>
            <person name="Christoffels A."/>
            <person name="Clutterbuck D.R."/>
            <person name="Crowe M.L."/>
            <person name="Dalla E."/>
            <person name="Dalrymple B.P."/>
            <person name="de Bono B."/>
            <person name="Della Gatta G."/>
            <person name="di Bernardo D."/>
            <person name="Down T."/>
            <person name="Engstrom P."/>
            <person name="Fagiolini M."/>
            <person name="Faulkner G."/>
            <person name="Fletcher C.F."/>
            <person name="Fukushima T."/>
            <person name="Furuno M."/>
            <person name="Futaki S."/>
            <person name="Gariboldi M."/>
            <person name="Georgii-Hemming P."/>
            <person name="Gingeras T.R."/>
            <person name="Gojobori T."/>
            <person name="Green R.E."/>
            <person name="Gustincich S."/>
            <person name="Harbers M."/>
            <person name="Hayashi Y."/>
            <person name="Hensch T.K."/>
            <person name="Hirokawa N."/>
            <person name="Hill D."/>
            <person name="Huminiecki L."/>
            <person name="Iacono M."/>
            <person name="Ikeo K."/>
            <person name="Iwama A."/>
            <person name="Ishikawa T."/>
            <person name="Jakt M."/>
            <person name="Kanapin A."/>
            <person name="Katoh M."/>
            <person name="Kawasawa Y."/>
            <person name="Kelso J."/>
            <person name="Kitamura H."/>
            <person name="Kitano H."/>
            <person name="Kollias G."/>
            <person name="Krishnan S.P."/>
            <person name="Kruger A."/>
            <person name="Kummerfeld S.K."/>
            <person name="Kurochkin I.V."/>
            <person name="Lareau L.F."/>
            <person name="Lazarevic D."/>
            <person name="Lipovich L."/>
            <person name="Liu J."/>
            <person name="Liuni S."/>
            <person name="McWilliam S."/>
            <person name="Madan Babu M."/>
            <person name="Madera M."/>
            <person name="Marchionni L."/>
            <person name="Matsuda H."/>
            <person name="Matsuzawa S."/>
            <person name="Miki H."/>
            <person name="Mignone F."/>
            <person name="Miyake S."/>
            <person name="Morris K."/>
            <person name="Mottagui-Tabar S."/>
            <person name="Mulder N."/>
            <person name="Nakano N."/>
            <person name="Nakauchi H."/>
            <person name="Ng P."/>
            <person name="Nilsson R."/>
            <person name="Nishiguchi S."/>
            <person name="Nishikawa S."/>
            <person name="Nori F."/>
            <person name="Ohara O."/>
            <person name="Okazaki Y."/>
            <person name="Orlando V."/>
            <person name="Pang K.C."/>
            <person name="Pavan W.J."/>
            <person name="Pavesi G."/>
            <person name="Pesole G."/>
            <person name="Petrovsky N."/>
            <person name="Piazza S."/>
            <person name="Reed J."/>
            <person name="Reid J.F."/>
            <person name="Ring B.Z."/>
            <person name="Ringwald M."/>
            <person name="Rost B."/>
            <person name="Ruan Y."/>
            <person name="Salzberg S.L."/>
            <person name="Sandelin A."/>
            <person name="Schneider C."/>
            <person name="Schoenbach C."/>
            <person name="Sekiguchi K."/>
            <person name="Semple C.A."/>
            <person name="Seno S."/>
            <person name="Sessa L."/>
            <person name="Sheng Y."/>
            <person name="Shibata Y."/>
            <person name="Shimada H."/>
            <person name="Shimada K."/>
            <person name="Silva D."/>
            <person name="Sinclair B."/>
            <person name="Sperling S."/>
            <person name="Stupka E."/>
            <person name="Sugiura K."/>
            <person name="Sultana R."/>
            <person name="Takenaka Y."/>
            <person name="Taki K."/>
            <person name="Tammoja K."/>
            <person name="Tan S.L."/>
            <person name="Tang S."/>
            <person name="Taylor M.S."/>
            <person name="Tegner J."/>
            <person name="Teichmann S.A."/>
            <person name="Ueda H.R."/>
            <person name="van Nimwegen E."/>
            <person name="Verardo R."/>
            <person name="Wei C.L."/>
            <person name="Yagi K."/>
            <person name="Yamanishi H."/>
            <person name="Zabarovsky E."/>
            <person name="Zhu S."/>
            <person name="Zimmer A."/>
            <person name="Hide W."/>
            <person name="Bult C."/>
            <person name="Grimmond S.M."/>
            <person name="Teasdale R.D."/>
            <person name="Liu E.T."/>
            <person name="Brusic V."/>
            <person name="Quackenbush J."/>
            <person name="Wahlestedt C."/>
            <person name="Mattick J.S."/>
            <person name="Hume D.A."/>
            <person name="Kai C."/>
            <person name="Sasaki D."/>
            <person name="Tomaru Y."/>
            <person name="Fukuda S."/>
            <person name="Kanamori-Katayama M."/>
            <person name="Suzuki M."/>
            <person name="Aoki J."/>
            <person name="Arakawa T."/>
            <person name="Iida J."/>
            <person name="Imamura K."/>
            <person name="Itoh M."/>
            <person name="Kato T."/>
            <person name="Kawaji H."/>
            <person name="Kawagashira N."/>
            <person name="Kawashima T."/>
            <person name="Kojima M."/>
            <person name="Kondo S."/>
            <person name="Konno H."/>
            <person name="Nakano K."/>
            <person name="Ninomiya N."/>
            <person name="Nishio T."/>
            <person name="Okada M."/>
            <person name="Plessy C."/>
            <person name="Shibata K."/>
            <person name="Shiraki T."/>
            <person name="Suzuki S."/>
            <person name="Tagami M."/>
            <person name="Waki K."/>
            <person name="Watahiki A."/>
            <person name="Okamura-Oho Y."/>
            <person name="Suzuki H."/>
            <person name="Kawai J."/>
            <person name="Hayashizaki Y."/>
        </authorList>
    </citation>
    <scope>NUCLEOTIDE SEQUENCE [LARGE SCALE MRNA]</scope>
    <source>
        <strain>C57BL/6J</strain>
        <tissue>Eye</tissue>
    </source>
</reference>
<reference key="2">
    <citation type="journal article" date="2009" name="PLoS Biol.">
        <title>Lineage-specific biology revealed by a finished genome assembly of the mouse.</title>
        <authorList>
            <person name="Church D.M."/>
            <person name="Goodstadt L."/>
            <person name="Hillier L.W."/>
            <person name="Zody M.C."/>
            <person name="Goldstein S."/>
            <person name="She X."/>
            <person name="Bult C.J."/>
            <person name="Agarwala R."/>
            <person name="Cherry J.L."/>
            <person name="DiCuccio M."/>
            <person name="Hlavina W."/>
            <person name="Kapustin Y."/>
            <person name="Meric P."/>
            <person name="Maglott D."/>
            <person name="Birtle Z."/>
            <person name="Marques A.C."/>
            <person name="Graves T."/>
            <person name="Zhou S."/>
            <person name="Teague B."/>
            <person name="Potamousis K."/>
            <person name="Churas C."/>
            <person name="Place M."/>
            <person name="Herschleb J."/>
            <person name="Runnheim R."/>
            <person name="Forrest D."/>
            <person name="Amos-Landgraf J."/>
            <person name="Schwartz D.C."/>
            <person name="Cheng Z."/>
            <person name="Lindblad-Toh K."/>
            <person name="Eichler E.E."/>
            <person name="Ponting C.P."/>
        </authorList>
    </citation>
    <scope>NUCLEOTIDE SEQUENCE [LARGE SCALE GENOMIC DNA]</scope>
    <source>
        <strain>C57BL/6J</strain>
    </source>
</reference>
<reference key="3">
    <citation type="submission" date="2005-07" db="EMBL/GenBank/DDBJ databases">
        <authorList>
            <person name="Mural R.J."/>
            <person name="Adams M.D."/>
            <person name="Myers E.W."/>
            <person name="Smith H.O."/>
            <person name="Venter J.C."/>
        </authorList>
    </citation>
    <scope>NUCLEOTIDE SEQUENCE [LARGE SCALE GENOMIC DNA]</scope>
</reference>
<reference key="4">
    <citation type="journal article" date="2004" name="Genome Res.">
        <title>The status, quality, and expansion of the NIH full-length cDNA project: the Mammalian Gene Collection (MGC).</title>
        <authorList>
            <consortium name="The MGC Project Team"/>
        </authorList>
    </citation>
    <scope>NUCLEOTIDE SEQUENCE [LARGE SCALE MRNA]</scope>
    <source>
        <strain>FVB/N</strain>
        <tissue>Colon</tissue>
    </source>
</reference>
<reference key="5">
    <citation type="journal article" date="2010" name="Cell">
        <title>A tissue-specific atlas of mouse protein phosphorylation and expression.</title>
        <authorList>
            <person name="Huttlin E.L."/>
            <person name="Jedrychowski M.P."/>
            <person name="Elias J.E."/>
            <person name="Goswami T."/>
            <person name="Rad R."/>
            <person name="Beausoleil S.A."/>
            <person name="Villen J."/>
            <person name="Haas W."/>
            <person name="Sowa M.E."/>
            <person name="Gygi S.P."/>
        </authorList>
    </citation>
    <scope>IDENTIFICATION BY MASS SPECTROMETRY [LARGE SCALE ANALYSIS]</scope>
    <source>
        <tissue>Brown adipose tissue</tissue>
        <tissue>Kidney</tissue>
        <tissue>Liver</tissue>
    </source>
</reference>
<organism>
    <name type="scientific">Mus musculus</name>
    <name type="common">Mouse</name>
    <dbReference type="NCBI Taxonomy" id="10090"/>
    <lineage>
        <taxon>Eukaryota</taxon>
        <taxon>Metazoa</taxon>
        <taxon>Chordata</taxon>
        <taxon>Craniata</taxon>
        <taxon>Vertebrata</taxon>
        <taxon>Euteleostomi</taxon>
        <taxon>Mammalia</taxon>
        <taxon>Eutheria</taxon>
        <taxon>Euarchontoglires</taxon>
        <taxon>Glires</taxon>
        <taxon>Rodentia</taxon>
        <taxon>Myomorpha</taxon>
        <taxon>Muroidea</taxon>
        <taxon>Muridae</taxon>
        <taxon>Murinae</taxon>
        <taxon>Mus</taxon>
        <taxon>Mus</taxon>
    </lineage>
</organism>
<keyword id="KW-0472">Membrane</keyword>
<keyword id="KW-0576">Peroxisome</keyword>
<keyword id="KW-0962">Peroxisome biogenesis</keyword>
<keyword id="KW-1185">Reference proteome</keyword>
<keyword id="KW-0812">Transmembrane</keyword>
<keyword id="KW-1133">Transmembrane helix</keyword>
<name>PEX16_MOUSE</name>
<gene>
    <name type="primary">Pex16</name>
</gene>
<proteinExistence type="evidence at protein level"/>
<sequence length="336" mass="38677">MEKLRLLSLRYQEYVTRHPAATAQLETAVRGLSYLLAGRFSDSHELSELVYSASNLLVLLNDGILRKELRKKLPVSLSQQKLLTWLSVLECVEVFMEMGAAKVWGEVGRWLVIALIQLAKAVLRMLLLIWFKAGIQTSPPIVPLDRETQAQPLDGDHNPGSQEPSYVGKRSHRVVRTLQNSPSLHSRYWGAPQQREIRQKQQQEELSTPPTPLGLQETIAESLYIARPLLHLLSLGLWGQRSWTPWLLSGVVDMTSLSLLSDRKNLTRRERLELRRRTILLLYYLLRSPFYDRFSEAKILFLLQLLTDHIPGVGLVARPLMDYLPSWQKIYFYSWG</sequence>
<protein>
    <recommendedName>
        <fullName>Peroxisomal membrane protein PEX16</fullName>
    </recommendedName>
    <alternativeName>
        <fullName>Peroxin-16</fullName>
    </alternativeName>
    <alternativeName>
        <fullName>Peroxisomal biogenesis factor 16</fullName>
    </alternativeName>
</protein>
<comment type="function">
    <text evidence="1">Required for peroxisome membrane biogenesis. May play a role in early stages of peroxisome assembly. Can recruit other peroxisomal proteins, such as PEX3 and PMP34, to de novo peroxisomes derived from the endoplasmic reticulum (ER). May function as receptor for PEX3 (By similarity).</text>
</comment>
<comment type="subunit">
    <text evidence="1">Interacts with PEX19.</text>
</comment>
<comment type="subcellular location">
    <subcellularLocation>
        <location evidence="1">Peroxisome membrane</location>
        <topology evidence="1">Multi-pass membrane protein</topology>
    </subcellularLocation>
</comment>
<comment type="similarity">
    <text evidence="3">Belongs to the peroxin-16 family.</text>
</comment>
<accession>Q91XC9</accession>
<accession>Q3UPY2</accession>
<evidence type="ECO:0000250" key="1">
    <source>
        <dbReference type="UniProtKB" id="Q9Y5Y5"/>
    </source>
</evidence>
<evidence type="ECO:0000255" key="2"/>
<evidence type="ECO:0000305" key="3"/>